<protein>
    <recommendedName>
        <fullName>Copper-exporting P-type ATPase</fullName>
        <ecNumber>7.2.2.8</ecNumber>
    </recommendedName>
    <alternativeName>
        <fullName>Copper-exporting P-type ATPase A</fullName>
    </alternativeName>
    <alternativeName>
        <fullName>Cu(+)-exporting ATPase</fullName>
    </alternativeName>
</protein>
<feature type="chain" id="PRO_0000046325" description="Copper-exporting P-type ATPase">
    <location>
        <begin position="1"/>
        <end position="961"/>
    </location>
</feature>
<feature type="transmembrane region" description="Helical" evidence="2">
    <location>
        <begin position="316"/>
        <end position="336"/>
    </location>
</feature>
<feature type="transmembrane region" description="Helical" evidence="2">
    <location>
        <begin position="345"/>
        <end position="365"/>
    </location>
</feature>
<feature type="transmembrane region" description="Helical" evidence="2">
    <location>
        <begin position="381"/>
        <end position="401"/>
    </location>
</feature>
<feature type="transmembrane region" description="Helical" evidence="2">
    <location>
        <begin position="565"/>
        <end position="585"/>
    </location>
</feature>
<feature type="transmembrane region" description="Helical" evidence="2">
    <location>
        <begin position="592"/>
        <end position="612"/>
    </location>
</feature>
<feature type="transmembrane region" description="Helical" evidence="2">
    <location>
        <begin position="860"/>
        <end position="880"/>
    </location>
</feature>
<feature type="transmembrane region" description="Helical" evidence="2">
    <location>
        <begin position="906"/>
        <end position="926"/>
    </location>
</feature>
<feature type="transmembrane region" description="Helical" evidence="2">
    <location>
        <begin position="928"/>
        <end position="948"/>
    </location>
</feature>
<feature type="domain" description="HMA 1" evidence="3">
    <location>
        <begin position="3"/>
        <end position="64"/>
    </location>
</feature>
<feature type="domain" description="HMA 2" evidence="3">
    <location>
        <begin position="69"/>
        <end position="130"/>
    </location>
</feature>
<feature type="domain" description="HMA 3" evidence="3">
    <location>
        <begin position="226"/>
        <end position="289"/>
    </location>
</feature>
<feature type="region of interest" description="Disordered" evidence="4">
    <location>
        <begin position="131"/>
        <end position="153"/>
    </location>
</feature>
<feature type="region of interest" description="Disordered" evidence="4">
    <location>
        <begin position="178"/>
        <end position="201"/>
    </location>
</feature>
<feature type="compositionally biased region" description="Polar residues" evidence="4">
    <location>
        <begin position="142"/>
        <end position="151"/>
    </location>
</feature>
<feature type="active site" description="4-aspartylphosphate intermediate" evidence="5">
    <location>
        <position position="650"/>
    </location>
</feature>
<feature type="binding site" evidence="3">
    <location>
        <position position="14"/>
    </location>
    <ligand>
        <name>Cu(+)</name>
        <dbReference type="ChEBI" id="CHEBI:49552"/>
        <label>1</label>
    </ligand>
</feature>
<feature type="binding site" evidence="3">
    <location>
        <position position="17"/>
    </location>
    <ligand>
        <name>Cu(+)</name>
        <dbReference type="ChEBI" id="CHEBI:49552"/>
        <label>1</label>
    </ligand>
</feature>
<feature type="binding site" evidence="3">
    <location>
        <position position="80"/>
    </location>
    <ligand>
        <name>Cu(+)</name>
        <dbReference type="ChEBI" id="CHEBI:49552"/>
        <label>2</label>
    </ligand>
</feature>
<feature type="binding site" evidence="3">
    <location>
        <position position="83"/>
    </location>
    <ligand>
        <name>Cu(+)</name>
        <dbReference type="ChEBI" id="CHEBI:49552"/>
        <label>2</label>
    </ligand>
</feature>
<feature type="binding site" evidence="3">
    <location>
        <position position="237"/>
    </location>
    <ligand>
        <name>Cu(+)</name>
        <dbReference type="ChEBI" id="CHEBI:49552"/>
        <label>3</label>
    </ligand>
</feature>
<feature type="binding site" evidence="3">
    <location>
        <position position="240"/>
    </location>
    <ligand>
        <name>Cu(+)</name>
        <dbReference type="ChEBI" id="CHEBI:49552"/>
        <label>3</label>
    </ligand>
</feature>
<feature type="binding site">
    <location>
        <position position="847"/>
    </location>
    <ligand>
        <name>Mg(2+)</name>
        <dbReference type="ChEBI" id="CHEBI:18420"/>
    </ligand>
</feature>
<feature type="binding site">
    <location>
        <position position="851"/>
    </location>
    <ligand>
        <name>Mg(2+)</name>
        <dbReference type="ChEBI" id="CHEBI:18420"/>
    </ligand>
</feature>
<feature type="sequence conflict" description="In Ref. 2; AAM84670 and 3; AAS61097." evidence="5" ref="2 3">
    <original>R</original>
    <variation>S</variation>
    <location>
        <position position="376"/>
    </location>
</feature>
<dbReference type="EC" id="7.2.2.8"/>
<dbReference type="EMBL" id="AL590842">
    <property type="protein sequence ID" value="CAL21688.1"/>
    <property type="molecule type" value="Genomic_DNA"/>
</dbReference>
<dbReference type="EMBL" id="AE009952">
    <property type="protein sequence ID" value="AAM84670.1"/>
    <property type="molecule type" value="Genomic_DNA"/>
</dbReference>
<dbReference type="EMBL" id="AE017042">
    <property type="protein sequence ID" value="AAS61097.1"/>
    <property type="molecule type" value="Genomic_DNA"/>
</dbReference>
<dbReference type="PIR" id="AE0375">
    <property type="entry name" value="AE0375"/>
</dbReference>
<dbReference type="RefSeq" id="WP_002208579.1">
    <property type="nucleotide sequence ID" value="NZ_UHIZ01000001.1"/>
</dbReference>
<dbReference type="RefSeq" id="YP_002348006.1">
    <property type="nucleotide sequence ID" value="NC_003143.1"/>
</dbReference>
<dbReference type="SMR" id="Q8ZCA7"/>
<dbReference type="STRING" id="214092.YPO3086"/>
<dbReference type="PaxDb" id="214092-YPO3086"/>
<dbReference type="DNASU" id="1146039"/>
<dbReference type="EnsemblBacteria" id="AAS61097">
    <property type="protein sequence ID" value="AAS61097"/>
    <property type="gene ID" value="YP_0838"/>
</dbReference>
<dbReference type="GeneID" id="57975618"/>
<dbReference type="KEGG" id="ype:YPO3086"/>
<dbReference type="KEGG" id="ypk:y1093"/>
<dbReference type="KEGG" id="ypm:YP_0838"/>
<dbReference type="PATRIC" id="fig|214092.21.peg.3541"/>
<dbReference type="eggNOG" id="COG2217">
    <property type="taxonomic scope" value="Bacteria"/>
</dbReference>
<dbReference type="HOGENOM" id="CLU_001771_5_0_6"/>
<dbReference type="OMA" id="HWMLPAW"/>
<dbReference type="OrthoDB" id="9814270at2"/>
<dbReference type="Proteomes" id="UP000000815">
    <property type="component" value="Chromosome"/>
</dbReference>
<dbReference type="Proteomes" id="UP000001019">
    <property type="component" value="Chromosome"/>
</dbReference>
<dbReference type="Proteomes" id="UP000002490">
    <property type="component" value="Chromosome"/>
</dbReference>
<dbReference type="GO" id="GO:0016020">
    <property type="term" value="C:membrane"/>
    <property type="evidence" value="ECO:0000318"/>
    <property type="project" value="GO_Central"/>
</dbReference>
<dbReference type="GO" id="GO:0005886">
    <property type="term" value="C:plasma membrane"/>
    <property type="evidence" value="ECO:0007669"/>
    <property type="project" value="UniProtKB-SubCell"/>
</dbReference>
<dbReference type="GO" id="GO:0005524">
    <property type="term" value="F:ATP binding"/>
    <property type="evidence" value="ECO:0007669"/>
    <property type="project" value="UniProtKB-KW"/>
</dbReference>
<dbReference type="GO" id="GO:0016887">
    <property type="term" value="F:ATP hydrolysis activity"/>
    <property type="evidence" value="ECO:0007669"/>
    <property type="project" value="InterPro"/>
</dbReference>
<dbReference type="GO" id="GO:0005507">
    <property type="term" value="F:copper ion binding"/>
    <property type="evidence" value="ECO:0000318"/>
    <property type="project" value="GO_Central"/>
</dbReference>
<dbReference type="GO" id="GO:0043682">
    <property type="term" value="F:P-type divalent copper transporter activity"/>
    <property type="evidence" value="ECO:0000318"/>
    <property type="project" value="GO_Central"/>
</dbReference>
<dbReference type="GO" id="GO:0140581">
    <property type="term" value="F:P-type monovalent copper transporter activity"/>
    <property type="evidence" value="ECO:0007669"/>
    <property type="project" value="UniProtKB-EC"/>
</dbReference>
<dbReference type="GO" id="GO:0055070">
    <property type="term" value="P:copper ion homeostasis"/>
    <property type="evidence" value="ECO:0000318"/>
    <property type="project" value="GO_Central"/>
</dbReference>
<dbReference type="CDD" id="cd00371">
    <property type="entry name" value="HMA"/>
    <property type="match status" value="3"/>
</dbReference>
<dbReference type="CDD" id="cd02094">
    <property type="entry name" value="P-type_ATPase_Cu-like"/>
    <property type="match status" value="1"/>
</dbReference>
<dbReference type="FunFam" id="3.30.70.100:FF:000030">
    <property type="entry name" value="Copper-exporting P-type ATPase"/>
    <property type="match status" value="1"/>
</dbReference>
<dbReference type="FunFam" id="3.40.1110.10:FF:000036">
    <property type="entry name" value="Copper-exporting P-type ATPase"/>
    <property type="match status" value="1"/>
</dbReference>
<dbReference type="FunFam" id="2.70.150.10:FF:000020">
    <property type="entry name" value="Copper-exporting P-type ATPase A"/>
    <property type="match status" value="1"/>
</dbReference>
<dbReference type="Gene3D" id="3.30.70.100">
    <property type="match status" value="3"/>
</dbReference>
<dbReference type="Gene3D" id="3.40.1110.10">
    <property type="entry name" value="Calcium-transporting ATPase, cytoplasmic domain N"/>
    <property type="match status" value="1"/>
</dbReference>
<dbReference type="Gene3D" id="2.70.150.10">
    <property type="entry name" value="Calcium-transporting ATPase, cytoplasmic transduction domain A"/>
    <property type="match status" value="1"/>
</dbReference>
<dbReference type="Gene3D" id="3.40.50.1000">
    <property type="entry name" value="HAD superfamily/HAD-like"/>
    <property type="match status" value="1"/>
</dbReference>
<dbReference type="InterPro" id="IPR023299">
    <property type="entry name" value="ATPase_P-typ_cyto_dom_N"/>
</dbReference>
<dbReference type="InterPro" id="IPR018303">
    <property type="entry name" value="ATPase_P-typ_P_site"/>
</dbReference>
<dbReference type="InterPro" id="IPR023298">
    <property type="entry name" value="ATPase_P-typ_TM_dom_sf"/>
</dbReference>
<dbReference type="InterPro" id="IPR008250">
    <property type="entry name" value="ATPase_P-typ_transduc_dom_A_sf"/>
</dbReference>
<dbReference type="InterPro" id="IPR036412">
    <property type="entry name" value="HAD-like_sf"/>
</dbReference>
<dbReference type="InterPro" id="IPR023214">
    <property type="entry name" value="HAD_sf"/>
</dbReference>
<dbReference type="InterPro" id="IPR017969">
    <property type="entry name" value="Heavy-metal-associated_CS"/>
</dbReference>
<dbReference type="InterPro" id="IPR006121">
    <property type="entry name" value="HMA_dom"/>
</dbReference>
<dbReference type="InterPro" id="IPR036163">
    <property type="entry name" value="HMA_dom_sf"/>
</dbReference>
<dbReference type="InterPro" id="IPR027256">
    <property type="entry name" value="P-typ_ATPase_IB"/>
</dbReference>
<dbReference type="InterPro" id="IPR001757">
    <property type="entry name" value="P_typ_ATPase"/>
</dbReference>
<dbReference type="InterPro" id="IPR044492">
    <property type="entry name" value="P_typ_ATPase_HD_dom"/>
</dbReference>
<dbReference type="NCBIfam" id="TIGR01511">
    <property type="entry name" value="ATPase-IB1_Cu"/>
    <property type="match status" value="1"/>
</dbReference>
<dbReference type="NCBIfam" id="TIGR01525">
    <property type="entry name" value="ATPase-IB_hvy"/>
    <property type="match status" value="1"/>
</dbReference>
<dbReference type="NCBIfam" id="TIGR01494">
    <property type="entry name" value="ATPase_P-type"/>
    <property type="match status" value="1"/>
</dbReference>
<dbReference type="NCBIfam" id="NF007952">
    <property type="entry name" value="PRK10671.1"/>
    <property type="match status" value="1"/>
</dbReference>
<dbReference type="PANTHER" id="PTHR43520">
    <property type="entry name" value="ATP7, ISOFORM B"/>
    <property type="match status" value="1"/>
</dbReference>
<dbReference type="PANTHER" id="PTHR43520:SF6">
    <property type="entry name" value="COPPER-EXPORTING P-TYPE ATPASE"/>
    <property type="match status" value="1"/>
</dbReference>
<dbReference type="Pfam" id="PF00122">
    <property type="entry name" value="E1-E2_ATPase"/>
    <property type="match status" value="1"/>
</dbReference>
<dbReference type="Pfam" id="PF00403">
    <property type="entry name" value="HMA"/>
    <property type="match status" value="3"/>
</dbReference>
<dbReference type="Pfam" id="PF00702">
    <property type="entry name" value="Hydrolase"/>
    <property type="match status" value="1"/>
</dbReference>
<dbReference type="PRINTS" id="PR00119">
    <property type="entry name" value="CATATPASE"/>
</dbReference>
<dbReference type="PRINTS" id="PR00943">
    <property type="entry name" value="CUATPASE"/>
</dbReference>
<dbReference type="SFLD" id="SFLDG00002">
    <property type="entry name" value="C1.7:_P-type_atpase_like"/>
    <property type="match status" value="1"/>
</dbReference>
<dbReference type="SFLD" id="SFLDF00027">
    <property type="entry name" value="p-type_atpase"/>
    <property type="match status" value="1"/>
</dbReference>
<dbReference type="SUPFAM" id="SSF81653">
    <property type="entry name" value="Calcium ATPase, transduction domain A"/>
    <property type="match status" value="1"/>
</dbReference>
<dbReference type="SUPFAM" id="SSF81665">
    <property type="entry name" value="Calcium ATPase, transmembrane domain M"/>
    <property type="match status" value="1"/>
</dbReference>
<dbReference type="SUPFAM" id="SSF56784">
    <property type="entry name" value="HAD-like"/>
    <property type="match status" value="1"/>
</dbReference>
<dbReference type="SUPFAM" id="SSF55008">
    <property type="entry name" value="HMA, heavy metal-associated domain"/>
    <property type="match status" value="3"/>
</dbReference>
<dbReference type="PROSITE" id="PS00154">
    <property type="entry name" value="ATPASE_E1_E2"/>
    <property type="match status" value="1"/>
</dbReference>
<dbReference type="PROSITE" id="PS01047">
    <property type="entry name" value="HMA_1"/>
    <property type="match status" value="3"/>
</dbReference>
<dbReference type="PROSITE" id="PS50846">
    <property type="entry name" value="HMA_2"/>
    <property type="match status" value="3"/>
</dbReference>
<accession>Q8ZCA7</accession>
<accession>Q0WCI2</accession>
<proteinExistence type="inferred from homology"/>
<comment type="function">
    <text evidence="1">Involved in copper export.</text>
</comment>
<comment type="catalytic activity">
    <reaction>
        <text>Cu(+)(in) + ATP + H2O = Cu(+)(out) + ADP + phosphate + H(+)</text>
        <dbReference type="Rhea" id="RHEA:25792"/>
        <dbReference type="ChEBI" id="CHEBI:15377"/>
        <dbReference type="ChEBI" id="CHEBI:15378"/>
        <dbReference type="ChEBI" id="CHEBI:30616"/>
        <dbReference type="ChEBI" id="CHEBI:43474"/>
        <dbReference type="ChEBI" id="CHEBI:49552"/>
        <dbReference type="ChEBI" id="CHEBI:456216"/>
        <dbReference type="EC" id="7.2.2.8"/>
    </reaction>
</comment>
<comment type="subcellular location">
    <subcellularLocation>
        <location evidence="5">Cell membrane</location>
        <topology evidence="5">Multi-pass membrane protein</topology>
    </subcellularLocation>
</comment>
<comment type="similarity">
    <text evidence="5">Belongs to the cation transport ATPase (P-type) (TC 3.A.3) family. Type IB subfamily.</text>
</comment>
<keyword id="KW-0067">ATP-binding</keyword>
<keyword id="KW-1003">Cell membrane</keyword>
<keyword id="KW-0186">Copper</keyword>
<keyword id="KW-0187">Copper transport</keyword>
<keyword id="KW-0406">Ion transport</keyword>
<keyword id="KW-0460">Magnesium</keyword>
<keyword id="KW-0472">Membrane</keyword>
<keyword id="KW-0479">Metal-binding</keyword>
<keyword id="KW-0547">Nucleotide-binding</keyword>
<keyword id="KW-0597">Phosphoprotein</keyword>
<keyword id="KW-1185">Reference proteome</keyword>
<keyword id="KW-0677">Repeat</keyword>
<keyword id="KW-1278">Translocase</keyword>
<keyword id="KW-0812">Transmembrane</keyword>
<keyword id="KW-1133">Transmembrane helix</keyword>
<keyword id="KW-0813">Transport</keyword>
<reference key="1">
    <citation type="journal article" date="2001" name="Nature">
        <title>Genome sequence of Yersinia pestis, the causative agent of plague.</title>
        <authorList>
            <person name="Parkhill J."/>
            <person name="Wren B.W."/>
            <person name="Thomson N.R."/>
            <person name="Titball R.W."/>
            <person name="Holden M.T.G."/>
            <person name="Prentice M.B."/>
            <person name="Sebaihia M."/>
            <person name="James K.D."/>
            <person name="Churcher C.M."/>
            <person name="Mungall K.L."/>
            <person name="Baker S."/>
            <person name="Basham D."/>
            <person name="Bentley S.D."/>
            <person name="Brooks K."/>
            <person name="Cerdeno-Tarraga A.-M."/>
            <person name="Chillingworth T."/>
            <person name="Cronin A."/>
            <person name="Davies R.M."/>
            <person name="Davis P."/>
            <person name="Dougan G."/>
            <person name="Feltwell T."/>
            <person name="Hamlin N."/>
            <person name="Holroyd S."/>
            <person name="Jagels K."/>
            <person name="Karlyshev A.V."/>
            <person name="Leather S."/>
            <person name="Moule S."/>
            <person name="Oyston P.C.F."/>
            <person name="Quail M.A."/>
            <person name="Rutherford K.M."/>
            <person name="Simmonds M."/>
            <person name="Skelton J."/>
            <person name="Stevens K."/>
            <person name="Whitehead S."/>
            <person name="Barrell B.G."/>
        </authorList>
    </citation>
    <scope>NUCLEOTIDE SEQUENCE [LARGE SCALE GENOMIC DNA]</scope>
    <source>
        <strain>CO-92 / Biovar Orientalis</strain>
    </source>
</reference>
<reference key="2">
    <citation type="journal article" date="2002" name="J. Bacteriol.">
        <title>Genome sequence of Yersinia pestis KIM.</title>
        <authorList>
            <person name="Deng W."/>
            <person name="Burland V."/>
            <person name="Plunkett G. III"/>
            <person name="Boutin A."/>
            <person name="Mayhew G.F."/>
            <person name="Liss P."/>
            <person name="Perna N.T."/>
            <person name="Rose D.J."/>
            <person name="Mau B."/>
            <person name="Zhou S."/>
            <person name="Schwartz D.C."/>
            <person name="Fetherston J.D."/>
            <person name="Lindler L.E."/>
            <person name="Brubaker R.R."/>
            <person name="Plano G.V."/>
            <person name="Straley S.C."/>
            <person name="McDonough K.A."/>
            <person name="Nilles M.L."/>
            <person name="Matson J.S."/>
            <person name="Blattner F.R."/>
            <person name="Perry R.D."/>
        </authorList>
    </citation>
    <scope>NUCLEOTIDE SEQUENCE [LARGE SCALE GENOMIC DNA]</scope>
    <source>
        <strain>KIM10+ / Biovar Mediaevalis</strain>
    </source>
</reference>
<reference key="3">
    <citation type="journal article" date="2004" name="DNA Res.">
        <title>Complete genome sequence of Yersinia pestis strain 91001, an isolate avirulent to humans.</title>
        <authorList>
            <person name="Song Y."/>
            <person name="Tong Z."/>
            <person name="Wang J."/>
            <person name="Wang L."/>
            <person name="Guo Z."/>
            <person name="Han Y."/>
            <person name="Zhang J."/>
            <person name="Pei D."/>
            <person name="Zhou D."/>
            <person name="Qin H."/>
            <person name="Pang X."/>
            <person name="Han Y."/>
            <person name="Zhai J."/>
            <person name="Li M."/>
            <person name="Cui B."/>
            <person name="Qi Z."/>
            <person name="Jin L."/>
            <person name="Dai R."/>
            <person name="Chen F."/>
            <person name="Li S."/>
            <person name="Ye C."/>
            <person name="Du Z."/>
            <person name="Lin W."/>
            <person name="Wang J."/>
            <person name="Yu J."/>
            <person name="Yang H."/>
            <person name="Wang J."/>
            <person name="Huang P."/>
            <person name="Yang R."/>
        </authorList>
    </citation>
    <scope>NUCLEOTIDE SEQUENCE [LARGE SCALE GENOMIC DNA]</scope>
    <source>
        <strain>91001 / Biovar Mediaevalis</strain>
    </source>
</reference>
<sequence>MLQTTLLALQGLSCMNCAQRVKAALESREDVHHAEVNVHYAKVTGEADTHALIETIKQTGYQATEAQTPDVELHLSGLSCGHCTETVRKALEAVSGVISADVTLESANVYGKADIQTLIAAVEQAGYHATQQGIDSPKTEPLTHSAQSQPESLAAAPNTVPATNVALATSTVSDTNTVLPTNTALPTNTTSTTSTADTASATSTAPVINPLPVTESVAQPAASEGESVQLLLTGMSCASCVSKVQNALQRVDGVQVARVNLAERSALVTGTQNNEALIAAVKNAGYGAEIIEDEGERRERQQQMSQASMKRFQWQAALGLLLGIPLMAWGLFGGSMTLTPETQTPWLIIGIITLLVMIFAGGHFYRNAWVSLKNGRATMDTLVALGTGAAWIYSITVNIWPDVFPMEARHLYYEASAMIIGLINLGHAMEQRARQRSSNALERLLDLAPPTAKLVTDDGEKVIPLADVQLGMILRLTTGDRVPVDGEIVQGEVWMDEAMLTGEPIPQQKSVGDIVHAGTQVQDGTVQFRASAIGSQTTLARIIKLVRQAQSSKPEIGKLADRISAVFVPTVVVIAIVAGLIWYFFGPQPQLVYTLVVATTVLIIACPCALGLATPMSIISGVGRAAEFGVLVRDADALQQASNLDTLVFDKTGTLTEGHPQVVAIHTFNGVSEQQALGWAAALETGSNHPLARAILQRAEGLTLATASQFRTLRGLGVSGEVDGIPLLLGNNRLLEEQQIDTRELQSLIQQQAESGATPVILTANGKPAALLSIRDPLREDSIGALQRLHQLGYSLVMLTGDNPITANAIAKEAGIDRVIAGVLPDGKADAIKQLQAAGHKVAMIGDGINDAPALAQADVGIAMGGGSDIAIETAAITLMRHSLYGVVDAVELSKATLRNMKQNLLGAFFYNALGIPIAAGILYPFTGTLLSPVVAGAAMALSSITVVSNANRLLRFKPKQ</sequence>
<name>COPA_YERPE</name>
<evidence type="ECO:0000250" key="1"/>
<evidence type="ECO:0000255" key="2"/>
<evidence type="ECO:0000255" key="3">
    <source>
        <dbReference type="PROSITE-ProRule" id="PRU00280"/>
    </source>
</evidence>
<evidence type="ECO:0000256" key="4">
    <source>
        <dbReference type="SAM" id="MobiDB-lite"/>
    </source>
</evidence>
<evidence type="ECO:0000305" key="5"/>
<gene>
    <name type="primary">copA</name>
    <name type="ordered locus">YPO3086</name>
    <name type="ordered locus">y1093</name>
    <name type="ordered locus">YP_0838</name>
</gene>
<organism>
    <name type="scientific">Yersinia pestis</name>
    <dbReference type="NCBI Taxonomy" id="632"/>
    <lineage>
        <taxon>Bacteria</taxon>
        <taxon>Pseudomonadati</taxon>
        <taxon>Pseudomonadota</taxon>
        <taxon>Gammaproteobacteria</taxon>
        <taxon>Enterobacterales</taxon>
        <taxon>Yersiniaceae</taxon>
        <taxon>Yersinia</taxon>
    </lineage>
</organism>